<gene>
    <name evidence="1" type="primary">orn</name>
    <name type="ordered locus">Lxx14150</name>
</gene>
<protein>
    <recommendedName>
        <fullName evidence="1">Oligoribonuclease</fullName>
        <ecNumber evidence="1">3.1.15.-</ecNumber>
    </recommendedName>
</protein>
<dbReference type="EC" id="3.1.15.-" evidence="1"/>
<dbReference type="EMBL" id="AE016822">
    <property type="protein sequence ID" value="AAT89231.1"/>
    <property type="molecule type" value="Genomic_DNA"/>
</dbReference>
<dbReference type="RefSeq" id="WP_011186223.1">
    <property type="nucleotide sequence ID" value="NC_006087.1"/>
</dbReference>
<dbReference type="SMR" id="Q6AEG5"/>
<dbReference type="STRING" id="281090.Lxx14150"/>
<dbReference type="KEGG" id="lxx:Lxx14150"/>
<dbReference type="eggNOG" id="COG1949">
    <property type="taxonomic scope" value="Bacteria"/>
</dbReference>
<dbReference type="HOGENOM" id="CLU_064761_3_0_11"/>
<dbReference type="Proteomes" id="UP000001306">
    <property type="component" value="Chromosome"/>
</dbReference>
<dbReference type="GO" id="GO:0005737">
    <property type="term" value="C:cytoplasm"/>
    <property type="evidence" value="ECO:0007669"/>
    <property type="project" value="UniProtKB-SubCell"/>
</dbReference>
<dbReference type="GO" id="GO:0000175">
    <property type="term" value="F:3'-5'-RNA exonuclease activity"/>
    <property type="evidence" value="ECO:0007669"/>
    <property type="project" value="InterPro"/>
</dbReference>
<dbReference type="GO" id="GO:0003676">
    <property type="term" value="F:nucleic acid binding"/>
    <property type="evidence" value="ECO:0007669"/>
    <property type="project" value="InterPro"/>
</dbReference>
<dbReference type="CDD" id="cd06135">
    <property type="entry name" value="Orn"/>
    <property type="match status" value="1"/>
</dbReference>
<dbReference type="FunFam" id="3.30.420.10:FF:000003">
    <property type="entry name" value="Oligoribonuclease"/>
    <property type="match status" value="1"/>
</dbReference>
<dbReference type="Gene3D" id="3.30.420.10">
    <property type="entry name" value="Ribonuclease H-like superfamily/Ribonuclease H"/>
    <property type="match status" value="1"/>
</dbReference>
<dbReference type="HAMAP" id="MF_00045">
    <property type="entry name" value="Oligoribonuclease"/>
    <property type="match status" value="1"/>
</dbReference>
<dbReference type="InterPro" id="IPR013520">
    <property type="entry name" value="Exonuclease_RNaseT/DNA_pol3"/>
</dbReference>
<dbReference type="InterPro" id="IPR022894">
    <property type="entry name" value="Oligoribonuclease"/>
</dbReference>
<dbReference type="InterPro" id="IPR012337">
    <property type="entry name" value="RNaseH-like_sf"/>
</dbReference>
<dbReference type="InterPro" id="IPR036397">
    <property type="entry name" value="RNaseH_sf"/>
</dbReference>
<dbReference type="NCBIfam" id="NF003765">
    <property type="entry name" value="PRK05359.1"/>
    <property type="match status" value="1"/>
</dbReference>
<dbReference type="PANTHER" id="PTHR11046">
    <property type="entry name" value="OLIGORIBONUCLEASE, MITOCHONDRIAL"/>
    <property type="match status" value="1"/>
</dbReference>
<dbReference type="PANTHER" id="PTHR11046:SF0">
    <property type="entry name" value="OLIGORIBONUCLEASE, MITOCHONDRIAL"/>
    <property type="match status" value="1"/>
</dbReference>
<dbReference type="Pfam" id="PF00929">
    <property type="entry name" value="RNase_T"/>
    <property type="match status" value="1"/>
</dbReference>
<dbReference type="SMART" id="SM00479">
    <property type="entry name" value="EXOIII"/>
    <property type="match status" value="1"/>
</dbReference>
<dbReference type="SUPFAM" id="SSF53098">
    <property type="entry name" value="Ribonuclease H-like"/>
    <property type="match status" value="1"/>
</dbReference>
<feature type="chain" id="PRO_0000111045" description="Oligoribonuclease">
    <location>
        <begin position="1"/>
        <end position="207"/>
    </location>
</feature>
<feature type="domain" description="Exonuclease" evidence="1">
    <location>
        <begin position="8"/>
        <end position="172"/>
    </location>
</feature>
<feature type="active site" evidence="1">
    <location>
        <position position="129"/>
    </location>
</feature>
<keyword id="KW-0963">Cytoplasm</keyword>
<keyword id="KW-0269">Exonuclease</keyword>
<keyword id="KW-0378">Hydrolase</keyword>
<keyword id="KW-0540">Nuclease</keyword>
<keyword id="KW-1185">Reference proteome</keyword>
<reference key="1">
    <citation type="journal article" date="2004" name="Mol. Plant Microbe Interact.">
        <title>The genome sequence of the Gram-positive sugarcane pathogen Leifsonia xyli subsp. xyli.</title>
        <authorList>
            <person name="Monteiro-Vitorello C.B."/>
            <person name="Camargo L.E.A."/>
            <person name="Van Sluys M.A."/>
            <person name="Kitajima J.P."/>
            <person name="Truffi D."/>
            <person name="do Amaral A.M."/>
            <person name="Harakava R."/>
            <person name="de Oliveira J.C.F."/>
            <person name="Wood D."/>
            <person name="de Oliveira M.C."/>
            <person name="Miyaki C.Y."/>
            <person name="Takita M.A."/>
            <person name="da Silva A.C.R."/>
            <person name="Furlan L.R."/>
            <person name="Carraro D.M."/>
            <person name="Camarotte G."/>
            <person name="Almeida N.F. Jr."/>
            <person name="Carrer H."/>
            <person name="Coutinho L.L."/>
            <person name="El-Dorry H.A."/>
            <person name="Ferro M.I.T."/>
            <person name="Gagliardi P.R."/>
            <person name="Giglioti E."/>
            <person name="Goldman M.H.S."/>
            <person name="Goldman G.H."/>
            <person name="Kimura E.T."/>
            <person name="Ferro E.S."/>
            <person name="Kuramae E.E."/>
            <person name="Lemos E.G.M."/>
            <person name="Lemos M.V.F."/>
            <person name="Mauro S.M.Z."/>
            <person name="Machado M.A."/>
            <person name="Marino C.L."/>
            <person name="Menck C.F."/>
            <person name="Nunes L.R."/>
            <person name="Oliveira R.C."/>
            <person name="Pereira G.G."/>
            <person name="Siqueira W."/>
            <person name="de Souza A.A."/>
            <person name="Tsai S.M."/>
            <person name="Zanca A.S."/>
            <person name="Simpson A.J.G."/>
            <person name="Brumbley S.M."/>
            <person name="Setubal J.C."/>
        </authorList>
    </citation>
    <scope>NUCLEOTIDE SEQUENCE [LARGE SCALE GENOMIC DNA]</scope>
    <source>
        <strain>CTCB07</strain>
    </source>
</reference>
<sequence>MATSSDRLVWIDCEMTGLDLAVDELVEIAVVITDFDLNVLDPGLSIVIKPDASALDNMNDFVREMHTTSGLIEEIPGGVSLAEAEYEALEYVLRFAPAARTAPLAGNTIGTDRMFLAKYMPRLDTHLHYRNVDVSSIKELARRWFPRVYFNAPEKNGGHRALADILESVRELDYYRKAAFVAEPGPTTEQTQAASATIVEKWTARMG</sequence>
<proteinExistence type="inferred from homology"/>
<organism>
    <name type="scientific">Leifsonia xyli subsp. xyli (strain CTCB07)</name>
    <dbReference type="NCBI Taxonomy" id="281090"/>
    <lineage>
        <taxon>Bacteria</taxon>
        <taxon>Bacillati</taxon>
        <taxon>Actinomycetota</taxon>
        <taxon>Actinomycetes</taxon>
        <taxon>Micrococcales</taxon>
        <taxon>Microbacteriaceae</taxon>
        <taxon>Leifsonia</taxon>
    </lineage>
</organism>
<accession>Q6AEG5</accession>
<comment type="function">
    <text evidence="1">3'-to-5' exoribonuclease specific for small oligoribonucleotides.</text>
</comment>
<comment type="subcellular location">
    <subcellularLocation>
        <location evidence="1">Cytoplasm</location>
    </subcellularLocation>
</comment>
<comment type="similarity">
    <text evidence="1">Belongs to the oligoribonuclease family.</text>
</comment>
<name>ORN_LEIXX</name>
<evidence type="ECO:0000255" key="1">
    <source>
        <dbReference type="HAMAP-Rule" id="MF_00045"/>
    </source>
</evidence>